<comment type="catalytic activity">
    <reaction evidence="1">
        <text>(S)-malate + a quinone = a quinol + oxaloacetate</text>
        <dbReference type="Rhea" id="RHEA:46012"/>
        <dbReference type="ChEBI" id="CHEBI:15589"/>
        <dbReference type="ChEBI" id="CHEBI:16452"/>
        <dbReference type="ChEBI" id="CHEBI:24646"/>
        <dbReference type="ChEBI" id="CHEBI:132124"/>
        <dbReference type="EC" id="1.1.5.4"/>
    </reaction>
</comment>
<comment type="cofactor">
    <cofactor evidence="1">
        <name>FAD</name>
        <dbReference type="ChEBI" id="CHEBI:57692"/>
    </cofactor>
</comment>
<comment type="pathway">
    <text evidence="1">Carbohydrate metabolism; tricarboxylic acid cycle; oxaloacetate from (S)-malate (quinone route): step 1/1.</text>
</comment>
<comment type="similarity">
    <text evidence="1">Belongs to the MQO family.</text>
</comment>
<reference key="1">
    <citation type="journal article" date="2007" name="Microbiology">
        <title>Comparative analysis of the Corynebacterium glutamicum group and complete genome sequence of strain R.</title>
        <authorList>
            <person name="Yukawa H."/>
            <person name="Omumasaba C.A."/>
            <person name="Nonaka H."/>
            <person name="Kos P."/>
            <person name="Okai N."/>
            <person name="Suzuki N."/>
            <person name="Suda M."/>
            <person name="Tsuge Y."/>
            <person name="Watanabe J."/>
            <person name="Ikeda Y."/>
            <person name="Vertes A.A."/>
            <person name="Inui M."/>
        </authorList>
    </citation>
    <scope>NUCLEOTIDE SEQUENCE [LARGE SCALE GENOMIC DNA]</scope>
    <source>
        <strain>R</strain>
    </source>
</reference>
<organism>
    <name type="scientific">Corynebacterium glutamicum (strain R)</name>
    <dbReference type="NCBI Taxonomy" id="340322"/>
    <lineage>
        <taxon>Bacteria</taxon>
        <taxon>Bacillati</taxon>
        <taxon>Actinomycetota</taxon>
        <taxon>Actinomycetes</taxon>
        <taxon>Mycobacteriales</taxon>
        <taxon>Corynebacteriaceae</taxon>
        <taxon>Corynebacterium</taxon>
    </lineage>
</organism>
<gene>
    <name evidence="1" type="primary">mqo</name>
    <name type="ordered locus">cgR_1830</name>
</gene>
<keyword id="KW-0274">FAD</keyword>
<keyword id="KW-0285">Flavoprotein</keyword>
<keyword id="KW-0560">Oxidoreductase</keyword>
<keyword id="KW-0816">Tricarboxylic acid cycle</keyword>
<dbReference type="EC" id="1.1.5.4" evidence="1"/>
<dbReference type="EMBL" id="AP009044">
    <property type="protein sequence ID" value="BAF54824.1"/>
    <property type="molecule type" value="Genomic_DNA"/>
</dbReference>
<dbReference type="RefSeq" id="WP_011014814.1">
    <property type="nucleotide sequence ID" value="NC_009342.1"/>
</dbReference>
<dbReference type="SMR" id="A4QF08"/>
<dbReference type="GeneID" id="1019958"/>
<dbReference type="KEGG" id="cgt:cgR_1830"/>
<dbReference type="HOGENOM" id="CLU_028151_0_0_11"/>
<dbReference type="PhylomeDB" id="A4QF08"/>
<dbReference type="UniPathway" id="UPA00223">
    <property type="reaction ID" value="UER01008"/>
</dbReference>
<dbReference type="Proteomes" id="UP000006698">
    <property type="component" value="Chromosome"/>
</dbReference>
<dbReference type="GO" id="GO:0047545">
    <property type="term" value="F:2-hydroxyglutarate dehydrogenase activity"/>
    <property type="evidence" value="ECO:0007669"/>
    <property type="project" value="TreeGrafter"/>
</dbReference>
<dbReference type="GO" id="GO:0008924">
    <property type="term" value="F:L-malate dehydrogenase (quinone) activity"/>
    <property type="evidence" value="ECO:0007669"/>
    <property type="project" value="UniProtKB-UniRule"/>
</dbReference>
<dbReference type="GO" id="GO:0006099">
    <property type="term" value="P:tricarboxylic acid cycle"/>
    <property type="evidence" value="ECO:0007669"/>
    <property type="project" value="UniProtKB-UniRule"/>
</dbReference>
<dbReference type="Gene3D" id="3.30.9.10">
    <property type="entry name" value="D-Amino Acid Oxidase, subunit A, domain 2"/>
    <property type="match status" value="1"/>
</dbReference>
<dbReference type="Gene3D" id="3.50.50.60">
    <property type="entry name" value="FAD/NAD(P)-binding domain"/>
    <property type="match status" value="1"/>
</dbReference>
<dbReference type="HAMAP" id="MF_00212">
    <property type="entry name" value="MQO"/>
    <property type="match status" value="1"/>
</dbReference>
<dbReference type="InterPro" id="IPR036188">
    <property type="entry name" value="FAD/NAD-bd_sf"/>
</dbReference>
<dbReference type="InterPro" id="IPR006231">
    <property type="entry name" value="MQO"/>
</dbReference>
<dbReference type="NCBIfam" id="TIGR01320">
    <property type="entry name" value="mal_quin_oxido"/>
    <property type="match status" value="1"/>
</dbReference>
<dbReference type="NCBIfam" id="NF003606">
    <property type="entry name" value="PRK05257.2-1"/>
    <property type="match status" value="1"/>
</dbReference>
<dbReference type="NCBIfam" id="NF003611">
    <property type="entry name" value="PRK05257.3-2"/>
    <property type="match status" value="1"/>
</dbReference>
<dbReference type="NCBIfam" id="NF009875">
    <property type="entry name" value="PRK13339.1"/>
    <property type="match status" value="1"/>
</dbReference>
<dbReference type="PANTHER" id="PTHR43104">
    <property type="entry name" value="L-2-HYDROXYGLUTARATE DEHYDROGENASE, MITOCHONDRIAL"/>
    <property type="match status" value="1"/>
</dbReference>
<dbReference type="PANTHER" id="PTHR43104:SF2">
    <property type="entry name" value="L-2-HYDROXYGLUTARATE DEHYDROGENASE, MITOCHONDRIAL"/>
    <property type="match status" value="1"/>
</dbReference>
<dbReference type="Pfam" id="PF06039">
    <property type="entry name" value="Mqo"/>
    <property type="match status" value="1"/>
</dbReference>
<dbReference type="SUPFAM" id="SSF51905">
    <property type="entry name" value="FAD/NAD(P)-binding domain"/>
    <property type="match status" value="1"/>
</dbReference>
<evidence type="ECO:0000255" key="1">
    <source>
        <dbReference type="HAMAP-Rule" id="MF_00212"/>
    </source>
</evidence>
<protein>
    <recommendedName>
        <fullName evidence="1">Probable malate:quinone oxidoreductase</fullName>
        <ecNumber evidence="1">1.1.5.4</ecNumber>
    </recommendedName>
    <alternativeName>
        <fullName evidence="1">MQO</fullName>
    </alternativeName>
    <alternativeName>
        <fullName evidence="1">Malate dehydrogenase [quinone]</fullName>
    </alternativeName>
</protein>
<sequence length="500" mass="54832">MSDSPKNAPRITDEADVVLIGAGIMSSTLGAMLRQLEPSWTQIVFERLDGPAQESSSPWNNAGTGHSALCELNYTPEVKGKVEIAKAVGINEKFQVSRQFWSHLVEEGVLSDPKEFINPVPHVSFGQGADQVAYIKARYEALKDHPLFQGMTYADDEATFTEKLPLMAKGRDFSDPVAISWIDEGTDINYGAQTKQYLDAAEVEGTEIRYGHEVKSIKADGAKWIVTVKNVHTGDTKTIKANFVFVGAGGYALDLLRSAGIPQVKGFAGFPVSGLWLRCTNEELIEQHAAKVYGKASVGAPPMSVPHLDTRVIEGEKGLLFGPYGGWTPKFLKEGSYLDLFKSIRPDNIPSYLGVAAQEFDLTKYLVTEVLKDQDKRMDALREYMPEAQNGDWETIVAGQRVQVIKPAGFPKFGSLEFGTTLINNSEGTIAGLLGASPGASIAPSAMIELLERCFGDRMIEWGDKLKDMIPSYGKKLASEPALFEQQWARTQKTLKLEEA</sequence>
<proteinExistence type="inferred from homology"/>
<name>MQO_CORGB</name>
<accession>A4QF08</accession>
<feature type="chain" id="PRO_1000023796" description="Probable malate:quinone oxidoreductase">
    <location>
        <begin position="1"/>
        <end position="500"/>
    </location>
</feature>